<evidence type="ECO:0000255" key="1"/>
<evidence type="ECO:0000305" key="2"/>
<keyword id="KW-0998">Cell outer membrane</keyword>
<keyword id="KW-0472">Membrane</keyword>
<keyword id="KW-0732">Signal</keyword>
<accession>Q9Z6M5</accession>
<proteinExistence type="inferred from homology"/>
<feature type="signal peptide" evidence="1">
    <location>
        <begin position="1"/>
        <end position="17"/>
    </location>
</feature>
<feature type="chain" id="PRO_0000020161" description="Putative outer membrane protein CPn_1034/CP_0818/CPj1034/CpB1074">
    <location>
        <begin position="18"/>
        <end position="262"/>
    </location>
</feature>
<reference key="1">
    <citation type="journal article" date="1999" name="Nat. Genet.">
        <title>Comparative genomes of Chlamydia pneumoniae and C. trachomatis.</title>
        <authorList>
            <person name="Kalman S."/>
            <person name="Mitchell W.P."/>
            <person name="Marathe R."/>
            <person name="Lammel C.J."/>
            <person name="Fan J."/>
            <person name="Hyman R.W."/>
            <person name="Olinger L."/>
            <person name="Grimwood J."/>
            <person name="Davis R.W."/>
            <person name="Stephens R.S."/>
        </authorList>
    </citation>
    <scope>NUCLEOTIDE SEQUENCE [LARGE SCALE GENOMIC DNA]</scope>
    <source>
        <strain>CWL029</strain>
    </source>
</reference>
<reference key="2">
    <citation type="journal article" date="2000" name="Nucleic Acids Res.">
        <title>Genome sequences of Chlamydia trachomatis MoPn and Chlamydia pneumoniae AR39.</title>
        <authorList>
            <person name="Read T.D."/>
            <person name="Brunham R.C."/>
            <person name="Shen C."/>
            <person name="Gill S.R."/>
            <person name="Heidelberg J.F."/>
            <person name="White O."/>
            <person name="Hickey E.K."/>
            <person name="Peterson J.D."/>
            <person name="Utterback T.R."/>
            <person name="Berry K.J."/>
            <person name="Bass S."/>
            <person name="Linher K.D."/>
            <person name="Weidman J.F."/>
            <person name="Khouri H.M."/>
            <person name="Craven B."/>
            <person name="Bowman C."/>
            <person name="Dodson R.J."/>
            <person name="Gwinn M.L."/>
            <person name="Nelson W.C."/>
            <person name="DeBoy R.T."/>
            <person name="Kolonay J.F."/>
            <person name="McClarty G."/>
            <person name="Salzberg S.L."/>
            <person name="Eisen J.A."/>
            <person name="Fraser C.M."/>
        </authorList>
    </citation>
    <scope>NUCLEOTIDE SEQUENCE [LARGE SCALE GENOMIC DNA]</scope>
    <source>
        <strain>AR39</strain>
    </source>
</reference>
<reference key="3">
    <citation type="journal article" date="2000" name="Nucleic Acids Res.">
        <title>Comparison of whole genome sequences of Chlamydia pneumoniae J138 from Japan and CWL029 from USA.</title>
        <authorList>
            <person name="Shirai M."/>
            <person name="Hirakawa H."/>
            <person name="Kimoto M."/>
            <person name="Tabuchi M."/>
            <person name="Kishi F."/>
            <person name="Ouchi K."/>
            <person name="Shiba T."/>
            <person name="Ishii K."/>
            <person name="Hattori M."/>
            <person name="Kuhara S."/>
            <person name="Nakazawa T."/>
        </authorList>
    </citation>
    <scope>NUCLEOTIDE SEQUENCE [LARGE SCALE GENOMIC DNA]</scope>
    <source>
        <strain>J138</strain>
    </source>
</reference>
<reference key="4">
    <citation type="submission" date="2002-05" db="EMBL/GenBank/DDBJ databases">
        <title>The genome sequence of Chlamydia pneumoniae TW183 and comparison with other Chlamydia strains based on whole genome sequence analysis.</title>
        <authorList>
            <person name="Geng M.M."/>
            <person name="Schuhmacher A."/>
            <person name="Muehldorfer I."/>
            <person name="Bensch K.W."/>
            <person name="Schaefer K.P."/>
            <person name="Schneider S."/>
            <person name="Pohl T."/>
            <person name="Essig A."/>
            <person name="Marre R."/>
            <person name="Melchers K."/>
        </authorList>
    </citation>
    <scope>NUCLEOTIDE SEQUENCE [LARGE SCALE GENOMIC DNA]</scope>
    <source>
        <strain>TW-183</strain>
    </source>
</reference>
<sequence>MKTWLFFTFLFSCSSFYASCRYAEVRSIHEVAGDILYDEENFWLILDLDDTLLQGGEALSHSIWKSKAIQGLQKQGTPEQEAWEAVVPFWIEIQEMGTVQPIESAIFLLIEKIQKQGKTTFVYTERPKTAKDLTLKQLHMLNVSLEDTAPQPQAPLPKNLLYTSGILFSGDYHKGPGLDLFLEICTPLPAKIIYIDNQKENVLRIGDLCQKYGIAYFGITYKAQELHPPIYFDNIAQVQYNYSKKLLSNEAAALLLRHQMHE</sequence>
<comment type="subcellular location">
    <subcellularLocation>
        <location evidence="2">Cell outer membrane</location>
        <topology evidence="2">Peripheral membrane protein</topology>
    </subcellularLocation>
</comment>
<gene>
    <name type="ordered locus">CPn_1034</name>
    <name type="ordered locus">CP_0818</name>
    <name type="ordered locus">CPj1034</name>
    <name type="ordered locus">CpB1074</name>
</gene>
<organism>
    <name type="scientific">Chlamydia pneumoniae</name>
    <name type="common">Chlamydophila pneumoniae</name>
    <dbReference type="NCBI Taxonomy" id="83558"/>
    <lineage>
        <taxon>Bacteria</taxon>
        <taxon>Pseudomonadati</taxon>
        <taxon>Chlamydiota</taxon>
        <taxon>Chlamydiia</taxon>
        <taxon>Chlamydiales</taxon>
        <taxon>Chlamydiaceae</taxon>
        <taxon>Chlamydia/Chlamydophila group</taxon>
        <taxon>Chlamydia</taxon>
    </lineage>
</organism>
<protein>
    <recommendedName>
        <fullName>Putative outer membrane protein CPn_1034/CP_0818/CPj1034/CpB1074</fullName>
    </recommendedName>
</protein>
<dbReference type="EMBL" id="AE001363">
    <property type="protein sequence ID" value="AAD19171.1"/>
    <property type="molecule type" value="Genomic_DNA"/>
</dbReference>
<dbReference type="EMBL" id="AE002161">
    <property type="protein sequence ID" value="AAF38613.1"/>
    <property type="molecule type" value="Genomic_DNA"/>
</dbReference>
<dbReference type="EMBL" id="BA000008">
    <property type="protein sequence ID" value="BAA99241.1"/>
    <property type="molecule type" value="Genomic_DNA"/>
</dbReference>
<dbReference type="EMBL" id="AE009440">
    <property type="protein sequence ID" value="AAP99003.1"/>
    <property type="molecule type" value="Genomic_DNA"/>
</dbReference>
<dbReference type="PIR" id="F72003">
    <property type="entry name" value="F72003"/>
</dbReference>
<dbReference type="PIR" id="G86619">
    <property type="entry name" value="G86619"/>
</dbReference>
<dbReference type="RefSeq" id="NP_225228.1">
    <property type="nucleotide sequence ID" value="NC_000922.1"/>
</dbReference>
<dbReference type="RefSeq" id="WP_010883667.1">
    <property type="nucleotide sequence ID" value="NZ_LN847257.1"/>
</dbReference>
<dbReference type="STRING" id="406984.CPK_ORF00461"/>
<dbReference type="GeneID" id="45051092"/>
<dbReference type="KEGG" id="cpa:CP_0818"/>
<dbReference type="KEGG" id="cpj:CPj1034"/>
<dbReference type="KEGG" id="cpn:CPn_1034"/>
<dbReference type="KEGG" id="cpt:CpB1074"/>
<dbReference type="PATRIC" id="fig|115713.3.peg.1132"/>
<dbReference type="eggNOG" id="COG0546">
    <property type="taxonomic scope" value="Bacteria"/>
</dbReference>
<dbReference type="HOGENOM" id="CLU_1064338_0_0_0"/>
<dbReference type="OrthoDB" id="18892at2"/>
<dbReference type="Proteomes" id="UP000000583">
    <property type="component" value="Chromosome"/>
</dbReference>
<dbReference type="Proteomes" id="UP000000801">
    <property type="component" value="Chromosome"/>
</dbReference>
<dbReference type="GO" id="GO:0009279">
    <property type="term" value="C:cell outer membrane"/>
    <property type="evidence" value="ECO:0007669"/>
    <property type="project" value="UniProtKB-SubCell"/>
</dbReference>
<dbReference type="InterPro" id="IPR022565">
    <property type="entry name" value="DUF2608"/>
</dbReference>
<dbReference type="InterPro" id="IPR036412">
    <property type="entry name" value="HAD-like_sf"/>
</dbReference>
<dbReference type="Pfam" id="PF11019">
    <property type="entry name" value="DUF2608"/>
    <property type="match status" value="1"/>
</dbReference>
<dbReference type="SUPFAM" id="SSF56784">
    <property type="entry name" value="HAD-like"/>
    <property type="match status" value="1"/>
</dbReference>
<name>OMPY_CHLPN</name>